<name>ALLB_ECOL5</name>
<comment type="function">
    <text evidence="1">Catalyzes the conversion of allantoin (5-ureidohydantoin) to allantoic acid by hydrolytic cleavage of the five-member hydantoin ring.</text>
</comment>
<comment type="catalytic activity">
    <reaction evidence="1">
        <text>(S)-allantoin + H2O = allantoate + H(+)</text>
        <dbReference type="Rhea" id="RHEA:17029"/>
        <dbReference type="ChEBI" id="CHEBI:15377"/>
        <dbReference type="ChEBI" id="CHEBI:15378"/>
        <dbReference type="ChEBI" id="CHEBI:15678"/>
        <dbReference type="ChEBI" id="CHEBI:17536"/>
        <dbReference type="EC" id="3.5.2.5"/>
    </reaction>
</comment>
<comment type="cofactor">
    <cofactor evidence="1">
        <name>Zn(2+)</name>
        <dbReference type="ChEBI" id="CHEBI:29105"/>
    </cofactor>
    <text evidence="1">Binds 2 Zn(2+) ions per subunit.</text>
</comment>
<comment type="pathway">
    <text evidence="1">Nitrogen metabolism; (S)-allantoin degradation; allantoate from (S)-allantoin: step 1/1.</text>
</comment>
<comment type="subunit">
    <text evidence="1">Homotetramer.</text>
</comment>
<comment type="PTM">
    <text evidence="1">Carboxylation allows a single lysine to coordinate two zinc ions.</text>
</comment>
<comment type="similarity">
    <text evidence="1">Belongs to the metallo-dependent hydrolases superfamily. Allantoinase family.</text>
</comment>
<reference key="1">
    <citation type="journal article" date="2006" name="Mol. Microbiol.">
        <title>Role of pathogenicity island-associated integrases in the genome plasticity of uropathogenic Escherichia coli strain 536.</title>
        <authorList>
            <person name="Hochhut B."/>
            <person name="Wilde C."/>
            <person name="Balling G."/>
            <person name="Middendorf B."/>
            <person name="Dobrindt U."/>
            <person name="Brzuszkiewicz E."/>
            <person name="Gottschalk G."/>
            <person name="Carniel E."/>
            <person name="Hacker J."/>
        </authorList>
    </citation>
    <scope>NUCLEOTIDE SEQUENCE [LARGE SCALE GENOMIC DNA]</scope>
    <source>
        <strain>536 / UPEC</strain>
    </source>
</reference>
<keyword id="KW-0378">Hydrolase</keyword>
<keyword id="KW-0479">Metal-binding</keyword>
<keyword id="KW-0659">Purine metabolism</keyword>
<keyword id="KW-0862">Zinc</keyword>
<proteinExistence type="inferred from homology"/>
<accession>Q0TKD0</accession>
<feature type="chain" id="PRO_0000317679" description="Allantoinase">
    <location>
        <begin position="1"/>
        <end position="453"/>
    </location>
</feature>
<feature type="binding site" evidence="1">
    <location>
        <position position="59"/>
    </location>
    <ligand>
        <name>Zn(2+)</name>
        <dbReference type="ChEBI" id="CHEBI:29105"/>
        <label>1</label>
    </ligand>
</feature>
<feature type="binding site" evidence="1">
    <location>
        <position position="61"/>
    </location>
    <ligand>
        <name>Zn(2+)</name>
        <dbReference type="ChEBI" id="CHEBI:29105"/>
        <label>1</label>
    </ligand>
</feature>
<feature type="binding site" description="via carbamate group" evidence="1">
    <location>
        <position position="146"/>
    </location>
    <ligand>
        <name>Zn(2+)</name>
        <dbReference type="ChEBI" id="CHEBI:29105"/>
        <label>1</label>
    </ligand>
</feature>
<feature type="binding site" description="via carbamate group" evidence="1">
    <location>
        <position position="146"/>
    </location>
    <ligand>
        <name>Zn(2+)</name>
        <dbReference type="ChEBI" id="CHEBI:29105"/>
        <label>2</label>
    </ligand>
</feature>
<feature type="binding site" evidence="1">
    <location>
        <position position="186"/>
    </location>
    <ligand>
        <name>Zn(2+)</name>
        <dbReference type="ChEBI" id="CHEBI:29105"/>
        <label>2</label>
    </ligand>
</feature>
<feature type="binding site" evidence="1">
    <location>
        <position position="242"/>
    </location>
    <ligand>
        <name>Zn(2+)</name>
        <dbReference type="ChEBI" id="CHEBI:29105"/>
        <label>2</label>
    </ligand>
</feature>
<feature type="binding site" evidence="1">
    <location>
        <position position="315"/>
    </location>
    <ligand>
        <name>Zn(2+)</name>
        <dbReference type="ChEBI" id="CHEBI:29105"/>
        <label>1</label>
    </ligand>
</feature>
<feature type="modified residue" description="N6-carboxylysine" evidence="1">
    <location>
        <position position="146"/>
    </location>
</feature>
<protein>
    <recommendedName>
        <fullName evidence="1">Allantoinase</fullName>
        <ecNumber evidence="1">3.5.2.5</ecNumber>
    </recommendedName>
    <alternativeName>
        <fullName evidence="1">Allantoin-utilizing enzyme</fullName>
    </alternativeName>
</protein>
<organism>
    <name type="scientific">Escherichia coli O6:K15:H31 (strain 536 / UPEC)</name>
    <dbReference type="NCBI Taxonomy" id="362663"/>
    <lineage>
        <taxon>Bacteria</taxon>
        <taxon>Pseudomonadati</taxon>
        <taxon>Pseudomonadota</taxon>
        <taxon>Gammaproteobacteria</taxon>
        <taxon>Enterobacterales</taxon>
        <taxon>Enterobacteriaceae</taxon>
        <taxon>Escherichia</taxon>
    </lineage>
</organism>
<evidence type="ECO:0000255" key="1">
    <source>
        <dbReference type="HAMAP-Rule" id="MF_01645"/>
    </source>
</evidence>
<dbReference type="EC" id="3.5.2.5" evidence="1"/>
<dbReference type="EMBL" id="CP000247">
    <property type="protein sequence ID" value="ABG68601.1"/>
    <property type="molecule type" value="Genomic_DNA"/>
</dbReference>
<dbReference type="RefSeq" id="WP_000006873.1">
    <property type="nucleotide sequence ID" value="NC_008253.1"/>
</dbReference>
<dbReference type="SMR" id="Q0TKD0"/>
<dbReference type="KEGG" id="ecp:ECP_0572"/>
<dbReference type="HOGENOM" id="CLU_015572_4_2_6"/>
<dbReference type="UniPathway" id="UPA00395">
    <property type="reaction ID" value="UER00653"/>
</dbReference>
<dbReference type="Proteomes" id="UP000009182">
    <property type="component" value="Chromosome"/>
</dbReference>
<dbReference type="GO" id="GO:0005737">
    <property type="term" value="C:cytoplasm"/>
    <property type="evidence" value="ECO:0007669"/>
    <property type="project" value="TreeGrafter"/>
</dbReference>
<dbReference type="GO" id="GO:0004038">
    <property type="term" value="F:allantoinase activity"/>
    <property type="evidence" value="ECO:0007669"/>
    <property type="project" value="UniProtKB-UniRule"/>
</dbReference>
<dbReference type="GO" id="GO:0050897">
    <property type="term" value="F:cobalt ion binding"/>
    <property type="evidence" value="ECO:0007669"/>
    <property type="project" value="InterPro"/>
</dbReference>
<dbReference type="GO" id="GO:0008270">
    <property type="term" value="F:zinc ion binding"/>
    <property type="evidence" value="ECO:0007669"/>
    <property type="project" value="InterPro"/>
</dbReference>
<dbReference type="GO" id="GO:0000256">
    <property type="term" value="P:allantoin catabolic process"/>
    <property type="evidence" value="ECO:0007669"/>
    <property type="project" value="UniProtKB-UniRule"/>
</dbReference>
<dbReference type="GO" id="GO:0006145">
    <property type="term" value="P:purine nucleobase catabolic process"/>
    <property type="evidence" value="ECO:0007669"/>
    <property type="project" value="TreeGrafter"/>
</dbReference>
<dbReference type="CDD" id="cd01315">
    <property type="entry name" value="L-HYD_ALN"/>
    <property type="match status" value="1"/>
</dbReference>
<dbReference type="FunFam" id="3.20.20.140:FF:000013">
    <property type="entry name" value="Allantoinase"/>
    <property type="match status" value="1"/>
</dbReference>
<dbReference type="Gene3D" id="3.20.20.140">
    <property type="entry name" value="Metal-dependent hydrolases"/>
    <property type="match status" value="1"/>
</dbReference>
<dbReference type="Gene3D" id="2.30.40.10">
    <property type="entry name" value="Urease, subunit C, domain 1"/>
    <property type="match status" value="1"/>
</dbReference>
<dbReference type="HAMAP" id="MF_01645">
    <property type="entry name" value="Hydantoinase"/>
    <property type="match status" value="1"/>
</dbReference>
<dbReference type="InterPro" id="IPR017593">
    <property type="entry name" value="Allantoinase"/>
</dbReference>
<dbReference type="InterPro" id="IPR047604">
    <property type="entry name" value="Allantoinase_bact"/>
</dbReference>
<dbReference type="InterPro" id="IPR006680">
    <property type="entry name" value="Amidohydro-rel"/>
</dbReference>
<dbReference type="InterPro" id="IPR050138">
    <property type="entry name" value="DHOase/Allantoinase_Hydrolase"/>
</dbReference>
<dbReference type="InterPro" id="IPR011059">
    <property type="entry name" value="Metal-dep_hydrolase_composite"/>
</dbReference>
<dbReference type="InterPro" id="IPR032466">
    <property type="entry name" value="Metal_Hydrolase"/>
</dbReference>
<dbReference type="NCBIfam" id="TIGR03178">
    <property type="entry name" value="allantoinase"/>
    <property type="match status" value="1"/>
</dbReference>
<dbReference type="NCBIfam" id="NF005960">
    <property type="entry name" value="PRK08044.1"/>
    <property type="match status" value="1"/>
</dbReference>
<dbReference type="PANTHER" id="PTHR43668">
    <property type="entry name" value="ALLANTOINASE"/>
    <property type="match status" value="1"/>
</dbReference>
<dbReference type="PANTHER" id="PTHR43668:SF4">
    <property type="entry name" value="ALLANTOINASE"/>
    <property type="match status" value="1"/>
</dbReference>
<dbReference type="Pfam" id="PF01979">
    <property type="entry name" value="Amidohydro_1"/>
    <property type="match status" value="1"/>
</dbReference>
<dbReference type="SUPFAM" id="SSF51338">
    <property type="entry name" value="Composite domain of metallo-dependent hydrolases"/>
    <property type="match status" value="1"/>
</dbReference>
<dbReference type="SUPFAM" id="SSF51556">
    <property type="entry name" value="Metallo-dependent hydrolases"/>
    <property type="match status" value="1"/>
</dbReference>
<sequence length="453" mass="49588">MSFDLIIKNGTVILENEARVVDIAVKDGKIAAIGQDLGDAKDVMDASGLVVSPGMVDAHTHISEPGRSHWEGYETGTRAAAKGGITTMIEMPLNQLPATVDRASIELKFDAAKGKLTIDAAQLGGLVSYNIDRLHELDEVGVVGFKCFVATCGDRGIDNDFRDVNDWQFFKGAQKLGELGQPVLVHCENALICDALGEEAKREGRVTAHDYVASRPVFTEVEAIRRVLYLAKVAGCRLHVCHVSSPEGVEEVTRARQEGQDVTCESCPHYFVLDTDQFEEIGTLAKCSPPIRDLENQKGMWEKLFNGEIDCLVSDHSPCPPEMKAGNIMKAWGGIAGLQSCMDVMFDEAVQKRGMSLPMFGKLMATNAADIFGLQQKGRIAPGKDADFVFIQPNSSYVLTNDDLEYRHKVSPYVGRTIGARITKTILRGDVIYDIEQGFPVAPKGQFILKHQQ</sequence>
<gene>
    <name evidence="1" type="primary">allB</name>
    <name type="ordered locus">ECP_0572</name>
</gene>